<evidence type="ECO:0000255" key="1">
    <source>
        <dbReference type="HAMAP-Rule" id="MF_01369"/>
    </source>
</evidence>
<evidence type="ECO:0000305" key="2"/>
<sequence length="95" mass="11215">MREYDIIRRPINTEKTNLQKETDNQITFEVARDANRVDIKNAIEKIFNTRVQAVKTMQVKGKVKQRGRIVGKRRNWKKAIVKLMPGQRIDFFEGV</sequence>
<proteinExistence type="inferred from homology"/>
<accession>C0Q9X1</accession>
<name>RL23_DESAH</name>
<organism>
    <name type="scientific">Desulforapulum autotrophicum (strain ATCC 43914 / DSM 3382 / VKM B-1955 / HRM2)</name>
    <name type="common">Desulfobacterium autotrophicum</name>
    <dbReference type="NCBI Taxonomy" id="177437"/>
    <lineage>
        <taxon>Bacteria</taxon>
        <taxon>Pseudomonadati</taxon>
        <taxon>Thermodesulfobacteriota</taxon>
        <taxon>Desulfobacteria</taxon>
        <taxon>Desulfobacterales</taxon>
        <taxon>Desulfobacteraceae</taxon>
        <taxon>Desulforapulum</taxon>
    </lineage>
</organism>
<protein>
    <recommendedName>
        <fullName evidence="1">Large ribosomal subunit protein uL23</fullName>
    </recommendedName>
    <alternativeName>
        <fullName evidence="2">50S ribosomal protein L23</fullName>
    </alternativeName>
</protein>
<comment type="function">
    <text evidence="1">One of the early assembly proteins it binds 23S rRNA. One of the proteins that surrounds the polypeptide exit tunnel on the outside of the ribosome. Forms the main docking site for trigger factor binding to the ribosome.</text>
</comment>
<comment type="subunit">
    <text evidence="1">Part of the 50S ribosomal subunit. Contacts protein L29, and trigger factor when it is bound to the ribosome.</text>
</comment>
<comment type="similarity">
    <text evidence="1">Belongs to the universal ribosomal protein uL23 family.</text>
</comment>
<dbReference type="EMBL" id="CP001087">
    <property type="protein sequence ID" value="ACN16689.1"/>
    <property type="molecule type" value="Genomic_DNA"/>
</dbReference>
<dbReference type="RefSeq" id="WP_015905439.1">
    <property type="nucleotide sequence ID" value="NC_012108.1"/>
</dbReference>
<dbReference type="SMR" id="C0Q9X1"/>
<dbReference type="STRING" id="177437.HRM2_36240"/>
<dbReference type="KEGG" id="dat:HRM2_36240"/>
<dbReference type="eggNOG" id="COG0089">
    <property type="taxonomic scope" value="Bacteria"/>
</dbReference>
<dbReference type="HOGENOM" id="CLU_037562_3_1_7"/>
<dbReference type="OrthoDB" id="9793353at2"/>
<dbReference type="Proteomes" id="UP000000442">
    <property type="component" value="Chromosome"/>
</dbReference>
<dbReference type="GO" id="GO:1990904">
    <property type="term" value="C:ribonucleoprotein complex"/>
    <property type="evidence" value="ECO:0007669"/>
    <property type="project" value="UniProtKB-KW"/>
</dbReference>
<dbReference type="GO" id="GO:0005840">
    <property type="term" value="C:ribosome"/>
    <property type="evidence" value="ECO:0007669"/>
    <property type="project" value="UniProtKB-KW"/>
</dbReference>
<dbReference type="GO" id="GO:0019843">
    <property type="term" value="F:rRNA binding"/>
    <property type="evidence" value="ECO:0007669"/>
    <property type="project" value="UniProtKB-UniRule"/>
</dbReference>
<dbReference type="GO" id="GO:0003735">
    <property type="term" value="F:structural constituent of ribosome"/>
    <property type="evidence" value="ECO:0007669"/>
    <property type="project" value="InterPro"/>
</dbReference>
<dbReference type="GO" id="GO:0006412">
    <property type="term" value="P:translation"/>
    <property type="evidence" value="ECO:0007669"/>
    <property type="project" value="UniProtKB-UniRule"/>
</dbReference>
<dbReference type="FunFam" id="3.30.70.330:FF:000001">
    <property type="entry name" value="50S ribosomal protein L23"/>
    <property type="match status" value="1"/>
</dbReference>
<dbReference type="Gene3D" id="3.30.70.330">
    <property type="match status" value="1"/>
</dbReference>
<dbReference type="HAMAP" id="MF_01369_B">
    <property type="entry name" value="Ribosomal_uL23_B"/>
    <property type="match status" value="1"/>
</dbReference>
<dbReference type="InterPro" id="IPR012677">
    <property type="entry name" value="Nucleotide-bd_a/b_plait_sf"/>
</dbReference>
<dbReference type="InterPro" id="IPR013025">
    <property type="entry name" value="Ribosomal_uL23-like"/>
</dbReference>
<dbReference type="InterPro" id="IPR012678">
    <property type="entry name" value="Ribosomal_uL23/eL15/eS24_sf"/>
</dbReference>
<dbReference type="NCBIfam" id="NF004359">
    <property type="entry name" value="PRK05738.1-3"/>
    <property type="match status" value="1"/>
</dbReference>
<dbReference type="NCBIfam" id="NF004363">
    <property type="entry name" value="PRK05738.2-4"/>
    <property type="match status" value="1"/>
</dbReference>
<dbReference type="NCBIfam" id="NF004366">
    <property type="entry name" value="PRK05738.3-2"/>
    <property type="match status" value="1"/>
</dbReference>
<dbReference type="PANTHER" id="PTHR11620">
    <property type="entry name" value="60S RIBOSOMAL PROTEIN L23A"/>
    <property type="match status" value="1"/>
</dbReference>
<dbReference type="Pfam" id="PF00276">
    <property type="entry name" value="Ribosomal_L23"/>
    <property type="match status" value="1"/>
</dbReference>
<dbReference type="SUPFAM" id="SSF54189">
    <property type="entry name" value="Ribosomal proteins S24e, L23 and L15e"/>
    <property type="match status" value="1"/>
</dbReference>
<keyword id="KW-1185">Reference proteome</keyword>
<keyword id="KW-0687">Ribonucleoprotein</keyword>
<keyword id="KW-0689">Ribosomal protein</keyword>
<keyword id="KW-0694">RNA-binding</keyword>
<keyword id="KW-0699">rRNA-binding</keyword>
<feature type="chain" id="PRO_1000215030" description="Large ribosomal subunit protein uL23">
    <location>
        <begin position="1"/>
        <end position="95"/>
    </location>
</feature>
<gene>
    <name evidence="1" type="primary">rplW</name>
    <name type="ordered locus">HRM2_36240</name>
</gene>
<reference key="1">
    <citation type="journal article" date="2009" name="Environ. Microbiol.">
        <title>Genome sequence of Desulfobacterium autotrophicum HRM2, a marine sulfate reducer oxidizing organic carbon completely to carbon dioxide.</title>
        <authorList>
            <person name="Strittmatter A.W."/>
            <person name="Liesegang H."/>
            <person name="Rabus R."/>
            <person name="Decker I."/>
            <person name="Amann J."/>
            <person name="Andres S."/>
            <person name="Henne A."/>
            <person name="Fricke W.F."/>
            <person name="Martinez-Arias R."/>
            <person name="Bartels D."/>
            <person name="Goesmann A."/>
            <person name="Krause L."/>
            <person name="Puehler A."/>
            <person name="Klenk H.P."/>
            <person name="Richter M."/>
            <person name="Schuler M."/>
            <person name="Gloeckner F.O."/>
            <person name="Meyerdierks A."/>
            <person name="Gottschalk G."/>
            <person name="Amann R."/>
        </authorList>
    </citation>
    <scope>NUCLEOTIDE SEQUENCE [LARGE SCALE GENOMIC DNA]</scope>
    <source>
        <strain>ATCC 43914 / DSM 3382 / VKM B-1955 / HRM2</strain>
    </source>
</reference>